<protein>
    <recommendedName>
        <fullName evidence="1">Exodeoxyribonuclease 7 small subunit</fullName>
        <ecNumber evidence="1">3.1.11.6</ecNumber>
    </recommendedName>
    <alternativeName>
        <fullName evidence="1">Exodeoxyribonuclease VII small subunit</fullName>
        <shortName evidence="1">Exonuclease VII small subunit</shortName>
    </alternativeName>
</protein>
<sequence>MADPADVKKLSFETAMEELESIVKRLEDGKVPLEESVAIYERGEALKRRCEELLRTAEARVDKITTDAAGQPTGTAPLDVE</sequence>
<reference key="1">
    <citation type="submission" date="2006-09" db="EMBL/GenBank/DDBJ databases">
        <title>Complete sequence of Rhodopseudomonas palustris BisA53.</title>
        <authorList>
            <consortium name="US DOE Joint Genome Institute"/>
            <person name="Copeland A."/>
            <person name="Lucas S."/>
            <person name="Lapidus A."/>
            <person name="Barry K."/>
            <person name="Detter J.C."/>
            <person name="Glavina del Rio T."/>
            <person name="Hammon N."/>
            <person name="Israni S."/>
            <person name="Dalin E."/>
            <person name="Tice H."/>
            <person name="Pitluck S."/>
            <person name="Chain P."/>
            <person name="Malfatti S."/>
            <person name="Shin M."/>
            <person name="Vergez L."/>
            <person name="Schmutz J."/>
            <person name="Larimer F."/>
            <person name="Land M."/>
            <person name="Hauser L."/>
            <person name="Pelletier D.A."/>
            <person name="Kyrpides N."/>
            <person name="Kim E."/>
            <person name="Harwood C.S."/>
            <person name="Oda Y."/>
            <person name="Richardson P."/>
        </authorList>
    </citation>
    <scope>NUCLEOTIDE SEQUENCE [LARGE SCALE GENOMIC DNA]</scope>
    <source>
        <strain>BisA53</strain>
    </source>
</reference>
<comment type="function">
    <text evidence="1">Bidirectionally degrades single-stranded DNA into large acid-insoluble oligonucleotides, which are then degraded further into small acid-soluble oligonucleotides.</text>
</comment>
<comment type="catalytic activity">
    <reaction evidence="1">
        <text>Exonucleolytic cleavage in either 5'- to 3'- or 3'- to 5'-direction to yield nucleoside 5'-phosphates.</text>
        <dbReference type="EC" id="3.1.11.6"/>
    </reaction>
</comment>
<comment type="subunit">
    <text evidence="1">Heterooligomer composed of large and small subunits.</text>
</comment>
<comment type="subcellular location">
    <subcellularLocation>
        <location evidence="1">Cytoplasm</location>
    </subcellularLocation>
</comment>
<comment type="similarity">
    <text evidence="1">Belongs to the XseB family.</text>
</comment>
<keyword id="KW-0963">Cytoplasm</keyword>
<keyword id="KW-0269">Exonuclease</keyword>
<keyword id="KW-0378">Hydrolase</keyword>
<keyword id="KW-0540">Nuclease</keyword>
<feature type="chain" id="PRO_0000303740" description="Exodeoxyribonuclease 7 small subunit">
    <location>
        <begin position="1"/>
        <end position="81"/>
    </location>
</feature>
<gene>
    <name evidence="1" type="primary">xseB</name>
    <name type="ordered locus">RPE_1068</name>
</gene>
<organism>
    <name type="scientific">Rhodopseudomonas palustris (strain BisA53)</name>
    <dbReference type="NCBI Taxonomy" id="316055"/>
    <lineage>
        <taxon>Bacteria</taxon>
        <taxon>Pseudomonadati</taxon>
        <taxon>Pseudomonadota</taxon>
        <taxon>Alphaproteobacteria</taxon>
        <taxon>Hyphomicrobiales</taxon>
        <taxon>Nitrobacteraceae</taxon>
        <taxon>Rhodopseudomonas</taxon>
    </lineage>
</organism>
<dbReference type="EC" id="3.1.11.6" evidence="1"/>
<dbReference type="EMBL" id="CP000463">
    <property type="protein sequence ID" value="ABJ05022.1"/>
    <property type="molecule type" value="Genomic_DNA"/>
</dbReference>
<dbReference type="SMR" id="Q07SR2"/>
<dbReference type="STRING" id="316055.RPE_1068"/>
<dbReference type="KEGG" id="rpe:RPE_1068"/>
<dbReference type="eggNOG" id="COG1722">
    <property type="taxonomic scope" value="Bacteria"/>
</dbReference>
<dbReference type="HOGENOM" id="CLU_145918_0_3_5"/>
<dbReference type="OrthoDB" id="9808145at2"/>
<dbReference type="GO" id="GO:0005829">
    <property type="term" value="C:cytosol"/>
    <property type="evidence" value="ECO:0007669"/>
    <property type="project" value="TreeGrafter"/>
</dbReference>
<dbReference type="GO" id="GO:0009318">
    <property type="term" value="C:exodeoxyribonuclease VII complex"/>
    <property type="evidence" value="ECO:0007669"/>
    <property type="project" value="InterPro"/>
</dbReference>
<dbReference type="GO" id="GO:0008855">
    <property type="term" value="F:exodeoxyribonuclease VII activity"/>
    <property type="evidence" value="ECO:0007669"/>
    <property type="project" value="UniProtKB-UniRule"/>
</dbReference>
<dbReference type="GO" id="GO:0006308">
    <property type="term" value="P:DNA catabolic process"/>
    <property type="evidence" value="ECO:0007669"/>
    <property type="project" value="UniProtKB-UniRule"/>
</dbReference>
<dbReference type="FunFam" id="1.10.287.1040:FF:000004">
    <property type="entry name" value="Exodeoxyribonuclease 7 small subunit"/>
    <property type="match status" value="1"/>
</dbReference>
<dbReference type="Gene3D" id="1.10.287.1040">
    <property type="entry name" value="Exonuclease VII, small subunit"/>
    <property type="match status" value="1"/>
</dbReference>
<dbReference type="HAMAP" id="MF_00337">
    <property type="entry name" value="Exonuc_7_S"/>
    <property type="match status" value="1"/>
</dbReference>
<dbReference type="InterPro" id="IPR003761">
    <property type="entry name" value="Exonuc_VII_S"/>
</dbReference>
<dbReference type="InterPro" id="IPR037004">
    <property type="entry name" value="Exonuc_VII_ssu_sf"/>
</dbReference>
<dbReference type="NCBIfam" id="NF002139">
    <property type="entry name" value="PRK00977.1-3"/>
    <property type="match status" value="1"/>
</dbReference>
<dbReference type="NCBIfam" id="NF002140">
    <property type="entry name" value="PRK00977.1-4"/>
    <property type="match status" value="1"/>
</dbReference>
<dbReference type="NCBIfam" id="TIGR01280">
    <property type="entry name" value="xseB"/>
    <property type="match status" value="1"/>
</dbReference>
<dbReference type="PANTHER" id="PTHR34137">
    <property type="entry name" value="EXODEOXYRIBONUCLEASE 7 SMALL SUBUNIT"/>
    <property type="match status" value="1"/>
</dbReference>
<dbReference type="PANTHER" id="PTHR34137:SF1">
    <property type="entry name" value="EXODEOXYRIBONUCLEASE 7 SMALL SUBUNIT"/>
    <property type="match status" value="1"/>
</dbReference>
<dbReference type="Pfam" id="PF02609">
    <property type="entry name" value="Exonuc_VII_S"/>
    <property type="match status" value="1"/>
</dbReference>
<dbReference type="PIRSF" id="PIRSF006488">
    <property type="entry name" value="Exonuc_VII_S"/>
    <property type="match status" value="1"/>
</dbReference>
<dbReference type="SUPFAM" id="SSF116842">
    <property type="entry name" value="XseB-like"/>
    <property type="match status" value="1"/>
</dbReference>
<name>EX7S_RHOP5</name>
<evidence type="ECO:0000255" key="1">
    <source>
        <dbReference type="HAMAP-Rule" id="MF_00337"/>
    </source>
</evidence>
<accession>Q07SR2</accession>
<proteinExistence type="inferred from homology"/>